<sequence>MEWMKIDQVAKRSGLTKRTIRFYEEIGLIPAPKRTDGGVRLYSEDDMEELEKVISTKEVLGFSLQELQHFMETSRQLELNKEGYLLSLDPKERKEKLEEIQETLNHQLDLIDEKIRTFQSFKERLQGMKGKAERAIQSIE</sequence>
<evidence type="ECO:0000255" key="1">
    <source>
        <dbReference type="PROSITE-ProRule" id="PRU00254"/>
    </source>
</evidence>
<evidence type="ECO:0000269" key="2">
    <source>
    </source>
</evidence>
<protein>
    <recommendedName>
        <fullName>HTH-type transcriptional regulator YfmP</fullName>
    </recommendedName>
</protein>
<feature type="chain" id="PRO_0000098159" description="HTH-type transcriptional regulator YfmP">
    <location>
        <begin position="1"/>
        <end position="140"/>
    </location>
</feature>
<feature type="domain" description="HTH merR-type" evidence="1">
    <location>
        <begin position="1"/>
        <end position="73"/>
    </location>
</feature>
<feature type="DNA-binding region" description="H-T-H motif" evidence="1">
    <location>
        <begin position="6"/>
        <end position="25"/>
    </location>
</feature>
<reference key="1">
    <citation type="journal article" date="1997" name="Microbiology">
        <title>A 23.4 kb segment at the 69 degrees-70 degrees region of the Bacillus subtilis genome.</title>
        <authorList>
            <person name="Yamamoto H."/>
            <person name="Uchiyama S."/>
            <person name="Nugroho F.A."/>
            <person name="Sekiguchi J."/>
        </authorList>
    </citation>
    <scope>NUCLEOTIDE SEQUENCE [GENOMIC DNA]</scope>
    <source>
        <strain>168 / AC327</strain>
    </source>
</reference>
<reference key="2">
    <citation type="journal article" date="1997" name="Nature">
        <title>The complete genome sequence of the Gram-positive bacterium Bacillus subtilis.</title>
        <authorList>
            <person name="Kunst F."/>
            <person name="Ogasawara N."/>
            <person name="Moszer I."/>
            <person name="Albertini A.M."/>
            <person name="Alloni G."/>
            <person name="Azevedo V."/>
            <person name="Bertero M.G."/>
            <person name="Bessieres P."/>
            <person name="Bolotin A."/>
            <person name="Borchert S."/>
            <person name="Borriss R."/>
            <person name="Boursier L."/>
            <person name="Brans A."/>
            <person name="Braun M."/>
            <person name="Brignell S.C."/>
            <person name="Bron S."/>
            <person name="Brouillet S."/>
            <person name="Bruschi C.V."/>
            <person name="Caldwell B."/>
            <person name="Capuano V."/>
            <person name="Carter N.M."/>
            <person name="Choi S.-K."/>
            <person name="Codani J.-J."/>
            <person name="Connerton I.F."/>
            <person name="Cummings N.J."/>
            <person name="Daniel R.A."/>
            <person name="Denizot F."/>
            <person name="Devine K.M."/>
            <person name="Duesterhoeft A."/>
            <person name="Ehrlich S.D."/>
            <person name="Emmerson P.T."/>
            <person name="Entian K.-D."/>
            <person name="Errington J."/>
            <person name="Fabret C."/>
            <person name="Ferrari E."/>
            <person name="Foulger D."/>
            <person name="Fritz C."/>
            <person name="Fujita M."/>
            <person name="Fujita Y."/>
            <person name="Fuma S."/>
            <person name="Galizzi A."/>
            <person name="Galleron N."/>
            <person name="Ghim S.-Y."/>
            <person name="Glaser P."/>
            <person name="Goffeau A."/>
            <person name="Golightly E.J."/>
            <person name="Grandi G."/>
            <person name="Guiseppi G."/>
            <person name="Guy B.J."/>
            <person name="Haga K."/>
            <person name="Haiech J."/>
            <person name="Harwood C.R."/>
            <person name="Henaut A."/>
            <person name="Hilbert H."/>
            <person name="Holsappel S."/>
            <person name="Hosono S."/>
            <person name="Hullo M.-F."/>
            <person name="Itaya M."/>
            <person name="Jones L.-M."/>
            <person name="Joris B."/>
            <person name="Karamata D."/>
            <person name="Kasahara Y."/>
            <person name="Klaerr-Blanchard M."/>
            <person name="Klein C."/>
            <person name="Kobayashi Y."/>
            <person name="Koetter P."/>
            <person name="Koningstein G."/>
            <person name="Krogh S."/>
            <person name="Kumano M."/>
            <person name="Kurita K."/>
            <person name="Lapidus A."/>
            <person name="Lardinois S."/>
            <person name="Lauber J."/>
            <person name="Lazarevic V."/>
            <person name="Lee S.-M."/>
            <person name="Levine A."/>
            <person name="Liu H."/>
            <person name="Masuda S."/>
            <person name="Mauel C."/>
            <person name="Medigue C."/>
            <person name="Medina N."/>
            <person name="Mellado R.P."/>
            <person name="Mizuno M."/>
            <person name="Moestl D."/>
            <person name="Nakai S."/>
            <person name="Noback M."/>
            <person name="Noone D."/>
            <person name="O'Reilly M."/>
            <person name="Ogawa K."/>
            <person name="Ogiwara A."/>
            <person name="Oudega B."/>
            <person name="Park S.-H."/>
            <person name="Parro V."/>
            <person name="Pohl T.M."/>
            <person name="Portetelle D."/>
            <person name="Porwollik S."/>
            <person name="Prescott A.M."/>
            <person name="Presecan E."/>
            <person name="Pujic P."/>
            <person name="Purnelle B."/>
            <person name="Rapoport G."/>
            <person name="Rey M."/>
            <person name="Reynolds S."/>
            <person name="Rieger M."/>
            <person name="Rivolta C."/>
            <person name="Rocha E."/>
            <person name="Roche B."/>
            <person name="Rose M."/>
            <person name="Sadaie Y."/>
            <person name="Sato T."/>
            <person name="Scanlan E."/>
            <person name="Schleich S."/>
            <person name="Schroeter R."/>
            <person name="Scoffone F."/>
            <person name="Sekiguchi J."/>
            <person name="Sekowska A."/>
            <person name="Seror S.J."/>
            <person name="Serror P."/>
            <person name="Shin B.-S."/>
            <person name="Soldo B."/>
            <person name="Sorokin A."/>
            <person name="Tacconi E."/>
            <person name="Takagi T."/>
            <person name="Takahashi H."/>
            <person name="Takemaru K."/>
            <person name="Takeuchi M."/>
            <person name="Tamakoshi A."/>
            <person name="Tanaka T."/>
            <person name="Terpstra P."/>
            <person name="Tognoni A."/>
            <person name="Tosato V."/>
            <person name="Uchiyama S."/>
            <person name="Vandenbol M."/>
            <person name="Vannier F."/>
            <person name="Vassarotti A."/>
            <person name="Viari A."/>
            <person name="Wambutt R."/>
            <person name="Wedler E."/>
            <person name="Wedler H."/>
            <person name="Weitzenegger T."/>
            <person name="Winters P."/>
            <person name="Wipat A."/>
            <person name="Yamamoto H."/>
            <person name="Yamane K."/>
            <person name="Yasumoto K."/>
            <person name="Yata K."/>
            <person name="Yoshida K."/>
            <person name="Yoshikawa H.-F."/>
            <person name="Zumstein E."/>
            <person name="Yoshikawa H."/>
            <person name="Danchin A."/>
        </authorList>
    </citation>
    <scope>NUCLEOTIDE SEQUENCE [LARGE SCALE GENOMIC DNA]</scope>
    <source>
        <strain>168</strain>
    </source>
</reference>
<reference key="3">
    <citation type="journal article" date="2003" name="Microbiology">
        <title>Two MerR homologues that affect copper induction of the Bacillus subtilis copZA operon.</title>
        <authorList>
            <person name="Gaballa A."/>
            <person name="Cao M."/>
            <person name="Helmann J.D."/>
        </authorList>
    </citation>
    <scope>FUNCTION</scope>
    <source>
        <strain>168</strain>
    </source>
</reference>
<comment type="function">
    <text evidence="2">Repressor of the yfmOP operon. A mutation in yfmP leads to overexpression of yfmO, probably causing a decrease in cellular copper that is eventually responsible for a reduced copper induction of copZA.</text>
</comment>
<comment type="induction">
    <text>YfmP is autoregulated. There is no induction with copper or other metals.</text>
</comment>
<comment type="miscellaneous">
    <text>Binds a DNA inverted repeat of the yfmPO operon.</text>
</comment>
<name>YFMP_BACSU</name>
<dbReference type="EMBL" id="D86418">
    <property type="protein sequence ID" value="BAA20105.1"/>
    <property type="molecule type" value="Genomic_DNA"/>
</dbReference>
<dbReference type="EMBL" id="AL009126">
    <property type="protein sequence ID" value="CAB12558.1"/>
    <property type="molecule type" value="Genomic_DNA"/>
</dbReference>
<dbReference type="PIR" id="G69813">
    <property type="entry name" value="G69813"/>
</dbReference>
<dbReference type="RefSeq" id="WP_003243655.1">
    <property type="nucleotide sequence ID" value="NZ_OZ025638.1"/>
</dbReference>
<dbReference type="SMR" id="O06474"/>
<dbReference type="FunCoup" id="O06474">
    <property type="interactions" value="45"/>
</dbReference>
<dbReference type="STRING" id="224308.BSU07390"/>
<dbReference type="PaxDb" id="224308-BSU07390"/>
<dbReference type="EnsemblBacteria" id="CAB12558">
    <property type="protein sequence ID" value="CAB12558"/>
    <property type="gene ID" value="BSU_07390"/>
</dbReference>
<dbReference type="GeneID" id="936101"/>
<dbReference type="KEGG" id="bsu:BSU07390"/>
<dbReference type="PATRIC" id="fig|224308.179.peg.801"/>
<dbReference type="eggNOG" id="COG0789">
    <property type="taxonomic scope" value="Bacteria"/>
</dbReference>
<dbReference type="InParanoid" id="O06474"/>
<dbReference type="OrthoDB" id="9791488at2"/>
<dbReference type="PhylomeDB" id="O06474"/>
<dbReference type="BioCyc" id="BSUB:BSU07390-MONOMER"/>
<dbReference type="Proteomes" id="UP000001570">
    <property type="component" value="Chromosome"/>
</dbReference>
<dbReference type="GO" id="GO:0003677">
    <property type="term" value="F:DNA binding"/>
    <property type="evidence" value="ECO:0007669"/>
    <property type="project" value="UniProtKB-KW"/>
</dbReference>
<dbReference type="GO" id="GO:0003700">
    <property type="term" value="F:DNA-binding transcription factor activity"/>
    <property type="evidence" value="ECO:0000318"/>
    <property type="project" value="GO_Central"/>
</dbReference>
<dbReference type="GO" id="GO:0045892">
    <property type="term" value="P:negative regulation of DNA-templated transcription"/>
    <property type="evidence" value="ECO:0000318"/>
    <property type="project" value="GO_Central"/>
</dbReference>
<dbReference type="CDD" id="cd04774">
    <property type="entry name" value="HTH_YfmP"/>
    <property type="match status" value="1"/>
</dbReference>
<dbReference type="Gene3D" id="1.10.1660.10">
    <property type="match status" value="1"/>
</dbReference>
<dbReference type="InterPro" id="IPR009061">
    <property type="entry name" value="DNA-bd_dom_put_sf"/>
</dbReference>
<dbReference type="InterPro" id="IPR000551">
    <property type="entry name" value="MerR-type_HTH_dom"/>
</dbReference>
<dbReference type="InterPro" id="IPR047057">
    <property type="entry name" value="MerR_fam"/>
</dbReference>
<dbReference type="InterPro" id="IPR037392">
    <property type="entry name" value="YfmP_HTH"/>
</dbReference>
<dbReference type="PANTHER" id="PTHR30204:SF58">
    <property type="entry name" value="HTH-TYPE TRANSCRIPTIONAL REGULATOR YFMP"/>
    <property type="match status" value="1"/>
</dbReference>
<dbReference type="PANTHER" id="PTHR30204">
    <property type="entry name" value="REDOX-CYCLING DRUG-SENSING TRANSCRIPTIONAL ACTIVATOR SOXR"/>
    <property type="match status" value="1"/>
</dbReference>
<dbReference type="Pfam" id="PF13411">
    <property type="entry name" value="MerR_1"/>
    <property type="match status" value="1"/>
</dbReference>
<dbReference type="PRINTS" id="PR00040">
    <property type="entry name" value="HTHMERR"/>
</dbReference>
<dbReference type="SMART" id="SM00422">
    <property type="entry name" value="HTH_MERR"/>
    <property type="match status" value="1"/>
</dbReference>
<dbReference type="SUPFAM" id="SSF46955">
    <property type="entry name" value="Putative DNA-binding domain"/>
    <property type="match status" value="1"/>
</dbReference>
<dbReference type="PROSITE" id="PS50937">
    <property type="entry name" value="HTH_MERR_2"/>
    <property type="match status" value="1"/>
</dbReference>
<gene>
    <name type="primary">yfmP</name>
    <name type="ordered locus">BSU07390</name>
</gene>
<organism>
    <name type="scientific">Bacillus subtilis (strain 168)</name>
    <dbReference type="NCBI Taxonomy" id="224308"/>
    <lineage>
        <taxon>Bacteria</taxon>
        <taxon>Bacillati</taxon>
        <taxon>Bacillota</taxon>
        <taxon>Bacilli</taxon>
        <taxon>Bacillales</taxon>
        <taxon>Bacillaceae</taxon>
        <taxon>Bacillus</taxon>
    </lineage>
</organism>
<keyword id="KW-0238">DNA-binding</keyword>
<keyword id="KW-1185">Reference proteome</keyword>
<keyword id="KW-0678">Repressor</keyword>
<keyword id="KW-0804">Transcription</keyword>
<keyword id="KW-0805">Transcription regulation</keyword>
<accession>O06474</accession>
<proteinExistence type="evidence at transcript level"/>